<dbReference type="EC" id="2.8.3.5"/>
<dbReference type="EMBL" id="AF204145">
    <property type="protein sequence ID" value="AAK53493.1"/>
    <property type="molecule type" value="Genomic_DNA"/>
</dbReference>
<dbReference type="EMBL" id="AM920689">
    <property type="protein sequence ID" value="CAP53094.1"/>
    <property type="molecule type" value="Genomic_DNA"/>
</dbReference>
<dbReference type="SMR" id="B0RVK3"/>
<dbReference type="KEGG" id="xca:xcc-b100_3727"/>
<dbReference type="HOGENOM" id="CLU_019942_4_1_6"/>
<dbReference type="UniPathway" id="UPA00030"/>
<dbReference type="Proteomes" id="UP000001188">
    <property type="component" value="Chromosome"/>
</dbReference>
<dbReference type="GO" id="GO:0008260">
    <property type="term" value="F:succinyl-CoA:3-oxo-acid CoA-transferase activity"/>
    <property type="evidence" value="ECO:0007669"/>
    <property type="project" value="UniProtKB-EC"/>
</dbReference>
<dbReference type="GO" id="GO:0009103">
    <property type="term" value="P:lipopolysaccharide biosynthetic process"/>
    <property type="evidence" value="ECO:0007669"/>
    <property type="project" value="UniProtKB-UniPathway"/>
</dbReference>
<dbReference type="FunFam" id="3.40.1080.10:FF:000001">
    <property type="entry name" value="Succinyl-coa:3-ketoacid-coenzyme a transferase subunit b"/>
    <property type="match status" value="1"/>
</dbReference>
<dbReference type="Gene3D" id="3.40.1080.10">
    <property type="entry name" value="Glutaconate Coenzyme A-transferase"/>
    <property type="match status" value="1"/>
</dbReference>
<dbReference type="InterPro" id="IPR012791">
    <property type="entry name" value="3-oxoacid_CoA-transf_B"/>
</dbReference>
<dbReference type="InterPro" id="IPR004165">
    <property type="entry name" value="CoA_trans_fam_I"/>
</dbReference>
<dbReference type="InterPro" id="IPR004164">
    <property type="entry name" value="CoA_transf_AS"/>
</dbReference>
<dbReference type="InterPro" id="IPR037171">
    <property type="entry name" value="NagB/RpiA_transferase-like"/>
</dbReference>
<dbReference type="NCBIfam" id="TIGR02428">
    <property type="entry name" value="pcaJ_scoB_fam"/>
    <property type="match status" value="1"/>
</dbReference>
<dbReference type="PANTHER" id="PTHR13707">
    <property type="entry name" value="KETOACID-COENZYME A TRANSFERASE"/>
    <property type="match status" value="1"/>
</dbReference>
<dbReference type="PANTHER" id="PTHR13707:SF57">
    <property type="entry name" value="SUCCINYL-COA:3-KETOACID COENZYME A TRANSFERASE SUBUNIT B-RELATED"/>
    <property type="match status" value="1"/>
</dbReference>
<dbReference type="Pfam" id="PF01144">
    <property type="entry name" value="CoA_trans"/>
    <property type="match status" value="1"/>
</dbReference>
<dbReference type="SMART" id="SM00882">
    <property type="entry name" value="CoA_trans"/>
    <property type="match status" value="1"/>
</dbReference>
<dbReference type="SUPFAM" id="SSF100950">
    <property type="entry name" value="NagB/RpiA/CoA transferase-like"/>
    <property type="match status" value="1"/>
</dbReference>
<dbReference type="PROSITE" id="PS01274">
    <property type="entry name" value="COA_TRANSF_2"/>
    <property type="match status" value="1"/>
</dbReference>
<evidence type="ECO:0000250" key="1"/>
<evidence type="ECO:0000255" key="2">
    <source>
        <dbReference type="PROSITE-ProRule" id="PRU10034"/>
    </source>
</evidence>
<evidence type="ECO:0000305" key="3"/>
<reference key="1">
    <citation type="journal article" date="1997" name="Arch. Microbiol.">
        <title>Xanthomonas campestris pv. campestris lpsI and lpsJ genes encoding putative proteins with sequence similarity to the alpha- and beta-subunits of 3-oxoacid CoA-transferases are involved in LPS biosynthesis.</title>
        <authorList>
            <person name="Steinmann D."/>
            <person name="Koeplin R."/>
            <person name="Puehler A."/>
            <person name="Niehaus K."/>
        </authorList>
    </citation>
    <scope>NUCLEOTIDE SEQUENCE [GENOMIC DNA]</scope>
    <scope>FUNCTION</scope>
</reference>
<reference key="2">
    <citation type="journal article" date="2008" name="J. Biotechnol.">
        <title>The genome of Xanthomonas campestris pv. campestris B100 and its use for the reconstruction of metabolic pathways involved in xanthan biosynthesis.</title>
        <authorList>
            <person name="Vorhoelter F.-J."/>
            <person name="Schneiker S."/>
            <person name="Goesmann A."/>
            <person name="Krause L."/>
            <person name="Bekel T."/>
            <person name="Kaiser O."/>
            <person name="Linke B."/>
            <person name="Patschkowski T."/>
            <person name="Rueckert C."/>
            <person name="Schmid J."/>
            <person name="Sidhu V.K."/>
            <person name="Sieber V."/>
            <person name="Tauch A."/>
            <person name="Watt S.A."/>
            <person name="Weisshaar B."/>
            <person name="Becker A."/>
            <person name="Niehaus K."/>
            <person name="Puehler A."/>
        </authorList>
    </citation>
    <scope>NUCLEOTIDE SEQUENCE [LARGE SCALE GENOMIC DNA]</scope>
    <source>
        <strain>B100</strain>
    </source>
</reference>
<sequence length="213" mass="22328">MAWTRDQMAARAARELTDGAYVNLGIGLPTLVANHIPDGVDVWLQSENGLLGIGPFPGEDEVDADLINAGKQTVTARAGASYFGSHDSFAMIRGGHIDLAILGAMQVTDRGDLANWMVPGKMVKGMGGAMDLVAGVKRVVVLMEHVAKDGTHKILPQCDLPLTGVGVVDRIITDLAVFDVTDGGLVLVEAAEGVGLEELRAKTGVAFVVQTRG</sequence>
<keyword id="KW-0448">Lipopolysaccharide biosynthesis</keyword>
<keyword id="KW-0808">Transferase</keyword>
<name>SCOB_XANCB</name>
<comment type="catalytic activity">
    <reaction evidence="2">
        <text>a 3-oxo acid + succinyl-CoA = a 3-oxoacyl-CoA + succinate</text>
        <dbReference type="Rhea" id="RHEA:24564"/>
        <dbReference type="ChEBI" id="CHEBI:30031"/>
        <dbReference type="ChEBI" id="CHEBI:35973"/>
        <dbReference type="ChEBI" id="CHEBI:57292"/>
        <dbReference type="ChEBI" id="CHEBI:90726"/>
        <dbReference type="EC" id="2.8.3.5"/>
    </reaction>
</comment>
<comment type="pathway">
    <text>Bacterial outer membrane biogenesis; lipopolysaccharide biosynthesis.</text>
</comment>
<comment type="subunit">
    <text evidence="1">Heterodimer of a subunit A and a subunit B.</text>
</comment>
<comment type="similarity">
    <text evidence="3">Belongs to the 3-oxoacid CoA-transferase subunit B family.</text>
</comment>
<proteinExistence type="inferred from homology"/>
<accession>B0RVK3</accession>
<accession>O34263</accession>
<feature type="chain" id="PRO_0000333182" description="Succinyl-CoA:3-ketoacid coenzyme A transferase subunit B">
    <location>
        <begin position="1"/>
        <end position="213"/>
    </location>
</feature>
<feature type="active site" evidence="2">
    <location>
        <position position="47"/>
    </location>
</feature>
<feature type="sequence conflict" description="In Ref. 1; AAK53493." evidence="3" ref="1">
    <original>AA</original>
    <variation>P</variation>
    <location>
        <begin position="12"/>
        <end position="13"/>
    </location>
</feature>
<feature type="sequence conflict" description="In Ref. 1; AAK53493." evidence="3" ref="1">
    <original>VTDRGDLA</original>
    <variation>SPTAATSP</variation>
    <location>
        <begin position="107"/>
        <end position="114"/>
    </location>
</feature>
<protein>
    <recommendedName>
        <fullName>Succinyl-CoA:3-ketoacid coenzyme A transferase subunit B</fullName>
        <ecNumber>2.8.3.5</ecNumber>
    </recommendedName>
    <alternativeName>
        <fullName>OXCT B</fullName>
    </alternativeName>
    <alternativeName>
        <fullName>Succinyl-CoA:3-oxoacid CoA-transferase</fullName>
    </alternativeName>
</protein>
<gene>
    <name type="primary">lpsJ</name>
    <name type="synonym">wxcJ</name>
    <name type="ordered locus">xcc-b100_3727</name>
</gene>
<organism>
    <name type="scientific">Xanthomonas campestris pv. campestris (strain B100)</name>
    <dbReference type="NCBI Taxonomy" id="509169"/>
    <lineage>
        <taxon>Bacteria</taxon>
        <taxon>Pseudomonadati</taxon>
        <taxon>Pseudomonadota</taxon>
        <taxon>Gammaproteobacteria</taxon>
        <taxon>Lysobacterales</taxon>
        <taxon>Lysobacteraceae</taxon>
        <taxon>Xanthomonas</taxon>
    </lineage>
</organism>